<proteinExistence type="inferred from homology"/>
<accession>A8Z468</accession>
<feature type="chain" id="PRO_1000076538" description="Elongation factor P">
    <location>
        <begin position="1"/>
        <end position="185"/>
    </location>
</feature>
<comment type="function">
    <text evidence="1">Involved in peptide bond synthesis. Stimulates efficient translation and peptide-bond synthesis on native or reconstituted 70S ribosomes in vitro. Probably functions indirectly by altering the affinity of the ribosome for aminoacyl-tRNA, thus increasing their reactivity as acceptors for peptidyl transferase.</text>
</comment>
<comment type="pathway">
    <text evidence="1">Protein biosynthesis; polypeptide chain elongation.</text>
</comment>
<comment type="subcellular location">
    <subcellularLocation>
        <location evidence="1">Cytoplasm</location>
    </subcellularLocation>
</comment>
<comment type="similarity">
    <text evidence="1">Belongs to the elongation factor P family.</text>
</comment>
<evidence type="ECO:0000255" key="1">
    <source>
        <dbReference type="HAMAP-Rule" id="MF_00141"/>
    </source>
</evidence>
<gene>
    <name evidence="1" type="primary">efp</name>
    <name type="ordered locus">USA300HOU_1530</name>
</gene>
<name>EFP_STAAT</name>
<sequence>MISVNDFKTGLTISVDNAIWKVIDFQHVKPGKGSAFVRSKLRNLRTGAIQEKTFRAGEKVEPAMIENRRMQYLYADGDNHVFMDNESFEQTELSSDYLKEELNYLKEGMEVQIQTYEGETIGVELPKTVELTVTETEPGIKGDTATGATKSATVETGYTLNVPLFVNEGDVLIINTGDGSYISRG</sequence>
<reference key="1">
    <citation type="journal article" date="2007" name="BMC Microbiol.">
        <title>Subtle genetic changes enhance virulence of methicillin resistant and sensitive Staphylococcus aureus.</title>
        <authorList>
            <person name="Highlander S.K."/>
            <person name="Hulten K.G."/>
            <person name="Qin X."/>
            <person name="Jiang H."/>
            <person name="Yerrapragada S."/>
            <person name="Mason E.O. Jr."/>
            <person name="Shang Y."/>
            <person name="Williams T.M."/>
            <person name="Fortunov R.M."/>
            <person name="Liu Y."/>
            <person name="Igboeli O."/>
            <person name="Petrosino J."/>
            <person name="Tirumalai M."/>
            <person name="Uzman A."/>
            <person name="Fox G.E."/>
            <person name="Cardenas A.M."/>
            <person name="Muzny D.M."/>
            <person name="Hemphill L."/>
            <person name="Ding Y."/>
            <person name="Dugan S."/>
            <person name="Blyth P.R."/>
            <person name="Buhay C.J."/>
            <person name="Dinh H.H."/>
            <person name="Hawes A.C."/>
            <person name="Holder M."/>
            <person name="Kovar C.L."/>
            <person name="Lee S.L."/>
            <person name="Liu W."/>
            <person name="Nazareth L.V."/>
            <person name="Wang Q."/>
            <person name="Zhou J."/>
            <person name="Kaplan S.L."/>
            <person name="Weinstock G.M."/>
        </authorList>
    </citation>
    <scope>NUCLEOTIDE SEQUENCE [LARGE SCALE GENOMIC DNA]</scope>
    <source>
        <strain>USA300 / TCH1516</strain>
    </source>
</reference>
<keyword id="KW-0963">Cytoplasm</keyword>
<keyword id="KW-0251">Elongation factor</keyword>
<keyword id="KW-0648">Protein biosynthesis</keyword>
<protein>
    <recommendedName>
        <fullName evidence="1">Elongation factor P</fullName>
        <shortName evidence="1">EF-P</shortName>
    </recommendedName>
</protein>
<organism>
    <name type="scientific">Staphylococcus aureus (strain USA300 / TCH1516)</name>
    <dbReference type="NCBI Taxonomy" id="451516"/>
    <lineage>
        <taxon>Bacteria</taxon>
        <taxon>Bacillati</taxon>
        <taxon>Bacillota</taxon>
        <taxon>Bacilli</taxon>
        <taxon>Bacillales</taxon>
        <taxon>Staphylococcaceae</taxon>
        <taxon>Staphylococcus</taxon>
    </lineage>
</organism>
<dbReference type="EMBL" id="CP000730">
    <property type="protein sequence ID" value="ABX29537.1"/>
    <property type="molecule type" value="Genomic_DNA"/>
</dbReference>
<dbReference type="RefSeq" id="WP_000626504.1">
    <property type="nucleotide sequence ID" value="NC_010079.1"/>
</dbReference>
<dbReference type="SMR" id="A8Z468"/>
<dbReference type="KEGG" id="sax:USA300HOU_1530"/>
<dbReference type="HOGENOM" id="CLU_074944_0_1_9"/>
<dbReference type="UniPathway" id="UPA00345"/>
<dbReference type="GO" id="GO:0005737">
    <property type="term" value="C:cytoplasm"/>
    <property type="evidence" value="ECO:0007669"/>
    <property type="project" value="UniProtKB-SubCell"/>
</dbReference>
<dbReference type="GO" id="GO:0003746">
    <property type="term" value="F:translation elongation factor activity"/>
    <property type="evidence" value="ECO:0007669"/>
    <property type="project" value="UniProtKB-UniRule"/>
</dbReference>
<dbReference type="GO" id="GO:0043043">
    <property type="term" value="P:peptide biosynthetic process"/>
    <property type="evidence" value="ECO:0007669"/>
    <property type="project" value="InterPro"/>
</dbReference>
<dbReference type="CDD" id="cd04470">
    <property type="entry name" value="S1_EF-P_repeat_1"/>
    <property type="match status" value="1"/>
</dbReference>
<dbReference type="CDD" id="cd05794">
    <property type="entry name" value="S1_EF-P_repeat_2"/>
    <property type="match status" value="1"/>
</dbReference>
<dbReference type="FunFam" id="2.30.30.30:FF:000010">
    <property type="entry name" value="Elongation factor P"/>
    <property type="match status" value="1"/>
</dbReference>
<dbReference type="FunFam" id="2.40.50.140:FF:000004">
    <property type="entry name" value="Elongation factor P"/>
    <property type="match status" value="1"/>
</dbReference>
<dbReference type="FunFam" id="2.40.50.140:FF:000009">
    <property type="entry name" value="Elongation factor P"/>
    <property type="match status" value="1"/>
</dbReference>
<dbReference type="Gene3D" id="2.30.30.30">
    <property type="match status" value="1"/>
</dbReference>
<dbReference type="Gene3D" id="2.40.50.140">
    <property type="entry name" value="Nucleic acid-binding proteins"/>
    <property type="match status" value="2"/>
</dbReference>
<dbReference type="HAMAP" id="MF_00141">
    <property type="entry name" value="EF_P"/>
    <property type="match status" value="1"/>
</dbReference>
<dbReference type="InterPro" id="IPR015365">
    <property type="entry name" value="Elong-fact-P_C"/>
</dbReference>
<dbReference type="InterPro" id="IPR012340">
    <property type="entry name" value="NA-bd_OB-fold"/>
</dbReference>
<dbReference type="InterPro" id="IPR014722">
    <property type="entry name" value="Rib_uL2_dom2"/>
</dbReference>
<dbReference type="InterPro" id="IPR020599">
    <property type="entry name" value="Transl_elong_fac_P/YeiP"/>
</dbReference>
<dbReference type="InterPro" id="IPR013185">
    <property type="entry name" value="Transl_elong_KOW-like"/>
</dbReference>
<dbReference type="InterPro" id="IPR001059">
    <property type="entry name" value="Transl_elong_P/YeiP_cen"/>
</dbReference>
<dbReference type="InterPro" id="IPR013852">
    <property type="entry name" value="Transl_elong_P/YeiP_CS"/>
</dbReference>
<dbReference type="InterPro" id="IPR011768">
    <property type="entry name" value="Transl_elongation_fac_P"/>
</dbReference>
<dbReference type="InterPro" id="IPR008991">
    <property type="entry name" value="Translation_prot_SH3-like_sf"/>
</dbReference>
<dbReference type="NCBIfam" id="TIGR00038">
    <property type="entry name" value="efp"/>
    <property type="match status" value="1"/>
</dbReference>
<dbReference type="NCBIfam" id="NF001810">
    <property type="entry name" value="PRK00529.1"/>
    <property type="match status" value="1"/>
</dbReference>
<dbReference type="PANTHER" id="PTHR30053">
    <property type="entry name" value="ELONGATION FACTOR P"/>
    <property type="match status" value="1"/>
</dbReference>
<dbReference type="PANTHER" id="PTHR30053:SF12">
    <property type="entry name" value="ELONGATION FACTOR P (EF-P) FAMILY PROTEIN"/>
    <property type="match status" value="1"/>
</dbReference>
<dbReference type="Pfam" id="PF01132">
    <property type="entry name" value="EFP"/>
    <property type="match status" value="1"/>
</dbReference>
<dbReference type="Pfam" id="PF08207">
    <property type="entry name" value="EFP_N"/>
    <property type="match status" value="1"/>
</dbReference>
<dbReference type="Pfam" id="PF09285">
    <property type="entry name" value="Elong-fact-P_C"/>
    <property type="match status" value="1"/>
</dbReference>
<dbReference type="PIRSF" id="PIRSF005901">
    <property type="entry name" value="EF-P"/>
    <property type="match status" value="1"/>
</dbReference>
<dbReference type="SMART" id="SM01185">
    <property type="entry name" value="EFP"/>
    <property type="match status" value="1"/>
</dbReference>
<dbReference type="SMART" id="SM00841">
    <property type="entry name" value="Elong-fact-P_C"/>
    <property type="match status" value="1"/>
</dbReference>
<dbReference type="SUPFAM" id="SSF50249">
    <property type="entry name" value="Nucleic acid-binding proteins"/>
    <property type="match status" value="2"/>
</dbReference>
<dbReference type="SUPFAM" id="SSF50104">
    <property type="entry name" value="Translation proteins SH3-like domain"/>
    <property type="match status" value="1"/>
</dbReference>
<dbReference type="PROSITE" id="PS01275">
    <property type="entry name" value="EFP"/>
    <property type="match status" value="1"/>
</dbReference>